<reference key="1">
    <citation type="submission" date="2006-12" db="EMBL/GenBank/DDBJ databases">
        <title>Complete sequence of Halorhodospira halophila SL1.</title>
        <authorList>
            <consortium name="US DOE Joint Genome Institute"/>
            <person name="Copeland A."/>
            <person name="Lucas S."/>
            <person name="Lapidus A."/>
            <person name="Barry K."/>
            <person name="Detter J.C."/>
            <person name="Glavina del Rio T."/>
            <person name="Hammon N."/>
            <person name="Israni S."/>
            <person name="Dalin E."/>
            <person name="Tice H."/>
            <person name="Pitluck S."/>
            <person name="Saunders E."/>
            <person name="Brettin T."/>
            <person name="Bruce D."/>
            <person name="Han C."/>
            <person name="Tapia R."/>
            <person name="Schmutz J."/>
            <person name="Larimer F."/>
            <person name="Land M."/>
            <person name="Hauser L."/>
            <person name="Kyrpides N."/>
            <person name="Mikhailova N."/>
            <person name="Hoff W."/>
            <person name="Richardson P."/>
        </authorList>
    </citation>
    <scope>NUCLEOTIDE SEQUENCE [LARGE SCALE GENOMIC DNA]</scope>
    <source>
        <strain>DSM 244 / SL1</strain>
    </source>
</reference>
<dbReference type="EMBL" id="CP000544">
    <property type="protein sequence ID" value="ABM62012.1"/>
    <property type="molecule type" value="Genomic_DNA"/>
</dbReference>
<dbReference type="RefSeq" id="WP_011814035.1">
    <property type="nucleotide sequence ID" value="NC_008789.1"/>
</dbReference>
<dbReference type="SMR" id="A1WWF0"/>
<dbReference type="STRING" id="349124.Hhal_1237"/>
<dbReference type="KEGG" id="hha:Hhal_1237"/>
<dbReference type="eggNOG" id="COG0333">
    <property type="taxonomic scope" value="Bacteria"/>
</dbReference>
<dbReference type="HOGENOM" id="CLU_129084_2_1_6"/>
<dbReference type="OrthoDB" id="9801927at2"/>
<dbReference type="Proteomes" id="UP000000647">
    <property type="component" value="Chromosome"/>
</dbReference>
<dbReference type="GO" id="GO:0015934">
    <property type="term" value="C:large ribosomal subunit"/>
    <property type="evidence" value="ECO:0007669"/>
    <property type="project" value="InterPro"/>
</dbReference>
<dbReference type="GO" id="GO:0003735">
    <property type="term" value="F:structural constituent of ribosome"/>
    <property type="evidence" value="ECO:0007669"/>
    <property type="project" value="InterPro"/>
</dbReference>
<dbReference type="GO" id="GO:0006412">
    <property type="term" value="P:translation"/>
    <property type="evidence" value="ECO:0007669"/>
    <property type="project" value="UniProtKB-UniRule"/>
</dbReference>
<dbReference type="HAMAP" id="MF_00340">
    <property type="entry name" value="Ribosomal_bL32"/>
    <property type="match status" value="1"/>
</dbReference>
<dbReference type="InterPro" id="IPR002677">
    <property type="entry name" value="Ribosomal_bL32"/>
</dbReference>
<dbReference type="InterPro" id="IPR044957">
    <property type="entry name" value="Ribosomal_bL32_bact"/>
</dbReference>
<dbReference type="InterPro" id="IPR011332">
    <property type="entry name" value="Ribosomal_zn-bd"/>
</dbReference>
<dbReference type="NCBIfam" id="TIGR01031">
    <property type="entry name" value="rpmF_bact"/>
    <property type="match status" value="1"/>
</dbReference>
<dbReference type="PANTHER" id="PTHR35534">
    <property type="entry name" value="50S RIBOSOMAL PROTEIN L32"/>
    <property type="match status" value="1"/>
</dbReference>
<dbReference type="PANTHER" id="PTHR35534:SF1">
    <property type="entry name" value="LARGE RIBOSOMAL SUBUNIT PROTEIN BL32"/>
    <property type="match status" value="1"/>
</dbReference>
<dbReference type="Pfam" id="PF01783">
    <property type="entry name" value="Ribosomal_L32p"/>
    <property type="match status" value="1"/>
</dbReference>
<dbReference type="SUPFAM" id="SSF57829">
    <property type="entry name" value="Zn-binding ribosomal proteins"/>
    <property type="match status" value="1"/>
</dbReference>
<feature type="chain" id="PRO_0000296476" description="Large ribosomal subunit protein bL32">
    <location>
        <begin position="1"/>
        <end position="59"/>
    </location>
</feature>
<feature type="region of interest" description="Disordered" evidence="2">
    <location>
        <begin position="1"/>
        <end position="59"/>
    </location>
</feature>
<feature type="compositionally biased region" description="Polar residues" evidence="2">
    <location>
        <begin position="23"/>
        <end position="34"/>
    </location>
</feature>
<feature type="compositionally biased region" description="Basic residues" evidence="2">
    <location>
        <begin position="49"/>
        <end position="59"/>
    </location>
</feature>
<protein>
    <recommendedName>
        <fullName evidence="1">Large ribosomal subunit protein bL32</fullName>
    </recommendedName>
    <alternativeName>
        <fullName evidence="3">50S ribosomal protein L32</fullName>
    </alternativeName>
</protein>
<keyword id="KW-1185">Reference proteome</keyword>
<keyword id="KW-0687">Ribonucleoprotein</keyword>
<keyword id="KW-0689">Ribosomal protein</keyword>
<organism>
    <name type="scientific">Halorhodospira halophila (strain DSM 244 / SL1)</name>
    <name type="common">Ectothiorhodospira halophila (strain DSM 244 / SL1)</name>
    <dbReference type="NCBI Taxonomy" id="349124"/>
    <lineage>
        <taxon>Bacteria</taxon>
        <taxon>Pseudomonadati</taxon>
        <taxon>Pseudomonadota</taxon>
        <taxon>Gammaproteobacteria</taxon>
        <taxon>Chromatiales</taxon>
        <taxon>Ectothiorhodospiraceae</taxon>
        <taxon>Halorhodospira</taxon>
    </lineage>
</organism>
<evidence type="ECO:0000255" key="1">
    <source>
        <dbReference type="HAMAP-Rule" id="MF_00340"/>
    </source>
</evidence>
<evidence type="ECO:0000256" key="2">
    <source>
        <dbReference type="SAM" id="MobiDB-lite"/>
    </source>
</evidence>
<evidence type="ECO:0000305" key="3"/>
<sequence length="59" mass="6822">MAVQQNRKTPSKRGMRRSHDSLSKPTLSTEQNTGETHRRHHISADGYYRGRKVTRGQDD</sequence>
<accession>A1WWF0</accession>
<proteinExistence type="inferred from homology"/>
<name>RL32_HALHL</name>
<comment type="similarity">
    <text evidence="1">Belongs to the bacterial ribosomal protein bL32 family.</text>
</comment>
<gene>
    <name evidence="1" type="primary">rpmF</name>
    <name type="ordered locus">Hhal_1237</name>
</gene>